<keyword id="KW-0067">ATP-binding</keyword>
<keyword id="KW-0315">Glutamine amidotransferase</keyword>
<keyword id="KW-0436">Ligase</keyword>
<keyword id="KW-0460">Magnesium</keyword>
<keyword id="KW-0479">Metal-binding</keyword>
<keyword id="KW-0547">Nucleotide-binding</keyword>
<keyword id="KW-0665">Pyrimidine biosynthesis</keyword>
<keyword id="KW-1185">Reference proteome</keyword>
<dbReference type="EC" id="6.3.4.2" evidence="1"/>
<dbReference type="EMBL" id="CP001037">
    <property type="protein sequence ID" value="ACC84323.1"/>
    <property type="molecule type" value="Genomic_DNA"/>
</dbReference>
<dbReference type="RefSeq" id="WP_012412264.1">
    <property type="nucleotide sequence ID" value="NC_010628.1"/>
</dbReference>
<dbReference type="SMR" id="B2IUT0"/>
<dbReference type="STRING" id="63737.Npun_F6033"/>
<dbReference type="EnsemblBacteria" id="ACC84323">
    <property type="protein sequence ID" value="ACC84323"/>
    <property type="gene ID" value="Npun_F6033"/>
</dbReference>
<dbReference type="KEGG" id="npu:Npun_F6033"/>
<dbReference type="eggNOG" id="COG0504">
    <property type="taxonomic scope" value="Bacteria"/>
</dbReference>
<dbReference type="HOGENOM" id="CLU_011675_5_0_3"/>
<dbReference type="OrthoDB" id="9801107at2"/>
<dbReference type="PhylomeDB" id="B2IUT0"/>
<dbReference type="UniPathway" id="UPA00159">
    <property type="reaction ID" value="UER00277"/>
</dbReference>
<dbReference type="Proteomes" id="UP000001191">
    <property type="component" value="Chromosome"/>
</dbReference>
<dbReference type="GO" id="GO:0005829">
    <property type="term" value="C:cytosol"/>
    <property type="evidence" value="ECO:0007669"/>
    <property type="project" value="TreeGrafter"/>
</dbReference>
<dbReference type="GO" id="GO:0005524">
    <property type="term" value="F:ATP binding"/>
    <property type="evidence" value="ECO:0007669"/>
    <property type="project" value="UniProtKB-KW"/>
</dbReference>
<dbReference type="GO" id="GO:0003883">
    <property type="term" value="F:CTP synthase activity"/>
    <property type="evidence" value="ECO:0007669"/>
    <property type="project" value="UniProtKB-UniRule"/>
</dbReference>
<dbReference type="GO" id="GO:0004359">
    <property type="term" value="F:glutaminase activity"/>
    <property type="evidence" value="ECO:0007669"/>
    <property type="project" value="RHEA"/>
</dbReference>
<dbReference type="GO" id="GO:0042802">
    <property type="term" value="F:identical protein binding"/>
    <property type="evidence" value="ECO:0007669"/>
    <property type="project" value="TreeGrafter"/>
</dbReference>
<dbReference type="GO" id="GO:0046872">
    <property type="term" value="F:metal ion binding"/>
    <property type="evidence" value="ECO:0007669"/>
    <property type="project" value="UniProtKB-KW"/>
</dbReference>
<dbReference type="GO" id="GO:0044210">
    <property type="term" value="P:'de novo' CTP biosynthetic process"/>
    <property type="evidence" value="ECO:0007669"/>
    <property type="project" value="UniProtKB-UniRule"/>
</dbReference>
<dbReference type="GO" id="GO:0019856">
    <property type="term" value="P:pyrimidine nucleobase biosynthetic process"/>
    <property type="evidence" value="ECO:0007669"/>
    <property type="project" value="TreeGrafter"/>
</dbReference>
<dbReference type="CDD" id="cd03113">
    <property type="entry name" value="CTPS_N"/>
    <property type="match status" value="1"/>
</dbReference>
<dbReference type="CDD" id="cd01746">
    <property type="entry name" value="GATase1_CTP_Synthase"/>
    <property type="match status" value="1"/>
</dbReference>
<dbReference type="FunFam" id="3.40.50.300:FF:000009">
    <property type="entry name" value="CTP synthase"/>
    <property type="match status" value="1"/>
</dbReference>
<dbReference type="FunFam" id="3.40.50.880:FF:000002">
    <property type="entry name" value="CTP synthase"/>
    <property type="match status" value="1"/>
</dbReference>
<dbReference type="Gene3D" id="3.40.50.880">
    <property type="match status" value="1"/>
</dbReference>
<dbReference type="Gene3D" id="3.40.50.300">
    <property type="entry name" value="P-loop containing nucleotide triphosphate hydrolases"/>
    <property type="match status" value="1"/>
</dbReference>
<dbReference type="HAMAP" id="MF_01227">
    <property type="entry name" value="PyrG"/>
    <property type="match status" value="1"/>
</dbReference>
<dbReference type="InterPro" id="IPR029062">
    <property type="entry name" value="Class_I_gatase-like"/>
</dbReference>
<dbReference type="InterPro" id="IPR004468">
    <property type="entry name" value="CTP_synthase"/>
</dbReference>
<dbReference type="InterPro" id="IPR017456">
    <property type="entry name" value="CTP_synthase_N"/>
</dbReference>
<dbReference type="InterPro" id="IPR017926">
    <property type="entry name" value="GATASE"/>
</dbReference>
<dbReference type="InterPro" id="IPR033828">
    <property type="entry name" value="GATase1_CTP_Synthase"/>
</dbReference>
<dbReference type="InterPro" id="IPR027417">
    <property type="entry name" value="P-loop_NTPase"/>
</dbReference>
<dbReference type="NCBIfam" id="NF003792">
    <property type="entry name" value="PRK05380.1"/>
    <property type="match status" value="1"/>
</dbReference>
<dbReference type="NCBIfam" id="TIGR00337">
    <property type="entry name" value="PyrG"/>
    <property type="match status" value="1"/>
</dbReference>
<dbReference type="PANTHER" id="PTHR11550">
    <property type="entry name" value="CTP SYNTHASE"/>
    <property type="match status" value="1"/>
</dbReference>
<dbReference type="PANTHER" id="PTHR11550:SF0">
    <property type="entry name" value="CTP SYNTHASE-RELATED"/>
    <property type="match status" value="1"/>
</dbReference>
<dbReference type="Pfam" id="PF06418">
    <property type="entry name" value="CTP_synth_N"/>
    <property type="match status" value="1"/>
</dbReference>
<dbReference type="Pfam" id="PF00117">
    <property type="entry name" value="GATase"/>
    <property type="match status" value="1"/>
</dbReference>
<dbReference type="SUPFAM" id="SSF52317">
    <property type="entry name" value="Class I glutamine amidotransferase-like"/>
    <property type="match status" value="1"/>
</dbReference>
<dbReference type="SUPFAM" id="SSF52540">
    <property type="entry name" value="P-loop containing nucleoside triphosphate hydrolases"/>
    <property type="match status" value="1"/>
</dbReference>
<dbReference type="PROSITE" id="PS51273">
    <property type="entry name" value="GATASE_TYPE_1"/>
    <property type="match status" value="1"/>
</dbReference>
<reference key="1">
    <citation type="journal article" date="2013" name="Plant Physiol.">
        <title>A Nostoc punctiforme Sugar Transporter Necessary to Establish a Cyanobacterium-Plant Symbiosis.</title>
        <authorList>
            <person name="Ekman M."/>
            <person name="Picossi S."/>
            <person name="Campbell E.L."/>
            <person name="Meeks J.C."/>
            <person name="Flores E."/>
        </authorList>
    </citation>
    <scope>NUCLEOTIDE SEQUENCE [LARGE SCALE GENOMIC DNA]</scope>
    <source>
        <strain>ATCC 29133 / PCC 73102</strain>
    </source>
</reference>
<name>PYRG_NOSP7</name>
<protein>
    <recommendedName>
        <fullName evidence="1">CTP synthase</fullName>
        <ecNumber evidence="1">6.3.4.2</ecNumber>
    </recommendedName>
    <alternativeName>
        <fullName evidence="1">Cytidine 5'-triphosphate synthase</fullName>
    </alternativeName>
    <alternativeName>
        <fullName evidence="1">Cytidine triphosphate synthetase</fullName>
        <shortName evidence="1">CTP synthetase</shortName>
        <shortName evidence="1">CTPS</shortName>
    </alternativeName>
    <alternativeName>
        <fullName evidence="1">UTP--ammonia ligase</fullName>
    </alternativeName>
</protein>
<proteinExistence type="inferred from homology"/>
<feature type="chain" id="PRO_1000139508" description="CTP synthase">
    <location>
        <begin position="1"/>
        <end position="545"/>
    </location>
</feature>
<feature type="domain" description="Glutamine amidotransferase type-1" evidence="1">
    <location>
        <begin position="292"/>
        <end position="534"/>
    </location>
</feature>
<feature type="region of interest" description="Amidoligase domain" evidence="1">
    <location>
        <begin position="1"/>
        <end position="267"/>
    </location>
</feature>
<feature type="active site" description="Nucleophile; for glutamine hydrolysis" evidence="1">
    <location>
        <position position="381"/>
    </location>
</feature>
<feature type="active site" evidence="1">
    <location>
        <position position="507"/>
    </location>
</feature>
<feature type="active site" evidence="1">
    <location>
        <position position="509"/>
    </location>
</feature>
<feature type="binding site" evidence="1">
    <location>
        <position position="13"/>
    </location>
    <ligand>
        <name>CTP</name>
        <dbReference type="ChEBI" id="CHEBI:37563"/>
        <note>allosteric inhibitor</note>
    </ligand>
</feature>
<feature type="binding site" evidence="1">
    <location>
        <position position="13"/>
    </location>
    <ligand>
        <name>UTP</name>
        <dbReference type="ChEBI" id="CHEBI:46398"/>
    </ligand>
</feature>
<feature type="binding site" evidence="1">
    <location>
        <begin position="14"/>
        <end position="19"/>
    </location>
    <ligand>
        <name>ATP</name>
        <dbReference type="ChEBI" id="CHEBI:30616"/>
    </ligand>
</feature>
<feature type="binding site" evidence="1">
    <location>
        <position position="71"/>
    </location>
    <ligand>
        <name>ATP</name>
        <dbReference type="ChEBI" id="CHEBI:30616"/>
    </ligand>
</feature>
<feature type="binding site" evidence="1">
    <location>
        <position position="71"/>
    </location>
    <ligand>
        <name>Mg(2+)</name>
        <dbReference type="ChEBI" id="CHEBI:18420"/>
    </ligand>
</feature>
<feature type="binding site" evidence="1">
    <location>
        <position position="141"/>
    </location>
    <ligand>
        <name>Mg(2+)</name>
        <dbReference type="ChEBI" id="CHEBI:18420"/>
    </ligand>
</feature>
<feature type="binding site" evidence="1">
    <location>
        <begin position="148"/>
        <end position="150"/>
    </location>
    <ligand>
        <name>CTP</name>
        <dbReference type="ChEBI" id="CHEBI:37563"/>
        <note>allosteric inhibitor</note>
    </ligand>
</feature>
<feature type="binding site" evidence="1">
    <location>
        <begin position="188"/>
        <end position="193"/>
    </location>
    <ligand>
        <name>CTP</name>
        <dbReference type="ChEBI" id="CHEBI:37563"/>
        <note>allosteric inhibitor</note>
    </ligand>
</feature>
<feature type="binding site" evidence="1">
    <location>
        <begin position="188"/>
        <end position="193"/>
    </location>
    <ligand>
        <name>UTP</name>
        <dbReference type="ChEBI" id="CHEBI:46398"/>
    </ligand>
</feature>
<feature type="binding site" evidence="1">
    <location>
        <position position="224"/>
    </location>
    <ligand>
        <name>CTP</name>
        <dbReference type="ChEBI" id="CHEBI:37563"/>
        <note>allosteric inhibitor</note>
    </ligand>
</feature>
<feature type="binding site" evidence="1">
    <location>
        <position position="224"/>
    </location>
    <ligand>
        <name>UTP</name>
        <dbReference type="ChEBI" id="CHEBI:46398"/>
    </ligand>
</feature>
<feature type="binding site" evidence="1">
    <location>
        <position position="354"/>
    </location>
    <ligand>
        <name>L-glutamine</name>
        <dbReference type="ChEBI" id="CHEBI:58359"/>
    </ligand>
</feature>
<feature type="binding site" evidence="1">
    <location>
        <begin position="382"/>
        <end position="385"/>
    </location>
    <ligand>
        <name>L-glutamine</name>
        <dbReference type="ChEBI" id="CHEBI:58359"/>
    </ligand>
</feature>
<feature type="binding site" evidence="1">
    <location>
        <position position="405"/>
    </location>
    <ligand>
        <name>L-glutamine</name>
        <dbReference type="ChEBI" id="CHEBI:58359"/>
    </ligand>
</feature>
<feature type="binding site" evidence="1">
    <location>
        <position position="462"/>
    </location>
    <ligand>
        <name>L-glutamine</name>
        <dbReference type="ChEBI" id="CHEBI:58359"/>
    </ligand>
</feature>
<accession>B2IUT0</accession>
<sequence length="545" mass="60388">MTKFIFVTGGVVSSIGKGIVAASLGRLLKSRGYSVSILKLDPYINIDPGTMSPFQHGEVFVTQDGAETDLDLGHYERFTDTSMSRLNCVTTGSIYQAVINKERRGDYNGGTVQVIPHITNEIKERILRVAKSTNPSVVITEIGGTVGDIESLPFLEAIRQFRKEVGRQHVLYMHVTLVPWIASAGEMKTKPTQHSVKELRSIGIQPDILVCRSDRPLPKGLKQKLSGFCDVPEECVITSQDAKSIYEVPLNLEREGMAEQVLNLLQMEQRQPDLTQWQTLVQRLHTPKHELEIAIVGKYVQLSDAYLSVVEALNHAAISTYGKLRLRWVNSEDLENESAETHLGGVDGVVVPGGFGVRGVDGKIAAIKYARDRQIPFLGLCLGMQCSVIEWARNIGGLTDANSAEFDPHTTNPVINLLPGQQEVVDLGGTMRLGLYPCRVLPDTLAFKLYQEDVIYERHRHRYEFNNAYRDLLLKSGYAISGTSPDGQLVEIVELPKHPFFLACQFHPEFQSRPSSPHPLFKGFIQAAIALSLSTSTTPTPLEVS</sequence>
<organism>
    <name type="scientific">Nostoc punctiforme (strain ATCC 29133 / PCC 73102)</name>
    <dbReference type="NCBI Taxonomy" id="63737"/>
    <lineage>
        <taxon>Bacteria</taxon>
        <taxon>Bacillati</taxon>
        <taxon>Cyanobacteriota</taxon>
        <taxon>Cyanophyceae</taxon>
        <taxon>Nostocales</taxon>
        <taxon>Nostocaceae</taxon>
        <taxon>Nostoc</taxon>
    </lineage>
</organism>
<gene>
    <name evidence="1" type="primary">pyrG</name>
    <name type="ordered locus">Npun_F6033</name>
</gene>
<evidence type="ECO:0000255" key="1">
    <source>
        <dbReference type="HAMAP-Rule" id="MF_01227"/>
    </source>
</evidence>
<comment type="function">
    <text evidence="1">Catalyzes the ATP-dependent amination of UTP to CTP with either L-glutamine or ammonia as the source of nitrogen. Regulates intracellular CTP levels through interactions with the four ribonucleotide triphosphates.</text>
</comment>
<comment type="catalytic activity">
    <reaction evidence="1">
        <text>UTP + L-glutamine + ATP + H2O = CTP + L-glutamate + ADP + phosphate + 2 H(+)</text>
        <dbReference type="Rhea" id="RHEA:26426"/>
        <dbReference type="ChEBI" id="CHEBI:15377"/>
        <dbReference type="ChEBI" id="CHEBI:15378"/>
        <dbReference type="ChEBI" id="CHEBI:29985"/>
        <dbReference type="ChEBI" id="CHEBI:30616"/>
        <dbReference type="ChEBI" id="CHEBI:37563"/>
        <dbReference type="ChEBI" id="CHEBI:43474"/>
        <dbReference type="ChEBI" id="CHEBI:46398"/>
        <dbReference type="ChEBI" id="CHEBI:58359"/>
        <dbReference type="ChEBI" id="CHEBI:456216"/>
        <dbReference type="EC" id="6.3.4.2"/>
    </reaction>
</comment>
<comment type="catalytic activity">
    <reaction evidence="1">
        <text>L-glutamine + H2O = L-glutamate + NH4(+)</text>
        <dbReference type="Rhea" id="RHEA:15889"/>
        <dbReference type="ChEBI" id="CHEBI:15377"/>
        <dbReference type="ChEBI" id="CHEBI:28938"/>
        <dbReference type="ChEBI" id="CHEBI:29985"/>
        <dbReference type="ChEBI" id="CHEBI:58359"/>
    </reaction>
</comment>
<comment type="catalytic activity">
    <reaction evidence="1">
        <text>UTP + NH4(+) + ATP = CTP + ADP + phosphate + 2 H(+)</text>
        <dbReference type="Rhea" id="RHEA:16597"/>
        <dbReference type="ChEBI" id="CHEBI:15378"/>
        <dbReference type="ChEBI" id="CHEBI:28938"/>
        <dbReference type="ChEBI" id="CHEBI:30616"/>
        <dbReference type="ChEBI" id="CHEBI:37563"/>
        <dbReference type="ChEBI" id="CHEBI:43474"/>
        <dbReference type="ChEBI" id="CHEBI:46398"/>
        <dbReference type="ChEBI" id="CHEBI:456216"/>
    </reaction>
</comment>
<comment type="activity regulation">
    <text evidence="1">Allosterically activated by GTP, when glutamine is the substrate; GTP has no effect on the reaction when ammonia is the substrate. The allosteric effector GTP functions by stabilizing the protein conformation that binds the tetrahedral intermediate(s) formed during glutamine hydrolysis. Inhibited by the product CTP, via allosteric rather than competitive inhibition.</text>
</comment>
<comment type="pathway">
    <text evidence="1">Pyrimidine metabolism; CTP biosynthesis via de novo pathway; CTP from UDP: step 2/2.</text>
</comment>
<comment type="subunit">
    <text evidence="1">Homotetramer.</text>
</comment>
<comment type="miscellaneous">
    <text evidence="1">CTPSs have evolved a hybrid strategy for distinguishing between UTP and CTP. The overlapping regions of the product feedback inhibitory and substrate sites recognize a common feature in both compounds, the triphosphate moiety. To differentiate isosteric substrate and product pyrimidine rings, an additional pocket far from the expected kinase/ligase catalytic site, specifically recognizes the cytosine and ribose portions of the product inhibitor.</text>
</comment>
<comment type="similarity">
    <text evidence="1">Belongs to the CTP synthase family.</text>
</comment>